<protein>
    <recommendedName>
        <fullName evidence="1">Large ribosomal subunit protein uL11</fullName>
    </recommendedName>
    <alternativeName>
        <fullName evidence="2">50S ribosomal protein L11</fullName>
    </alternativeName>
</protein>
<feature type="chain" id="PRO_1000072804" description="Large ribosomal subunit protein uL11">
    <location>
        <begin position="1"/>
        <end position="143"/>
    </location>
</feature>
<comment type="function">
    <text evidence="1">Forms part of the ribosomal stalk which helps the ribosome interact with GTP-bound translation factors.</text>
</comment>
<comment type="subunit">
    <text evidence="1">Part of the ribosomal stalk of the 50S ribosomal subunit. Interacts with L10 and the large rRNA to form the base of the stalk. L10 forms an elongated spine to which L12 dimers bind in a sequential fashion forming a multimeric L10(L12)X complex.</text>
</comment>
<comment type="PTM">
    <text evidence="1">One or more lysine residues are methylated.</text>
</comment>
<comment type="similarity">
    <text evidence="1">Belongs to the universal ribosomal protein uL11 family.</text>
</comment>
<gene>
    <name evidence="1" type="primary">rplK</name>
    <name type="ordered locus">PsycPRwf_2040</name>
</gene>
<keyword id="KW-0488">Methylation</keyword>
<keyword id="KW-0687">Ribonucleoprotein</keyword>
<keyword id="KW-0689">Ribosomal protein</keyword>
<keyword id="KW-0694">RNA-binding</keyword>
<keyword id="KW-0699">rRNA-binding</keyword>
<accession>A5WH39</accession>
<reference key="1">
    <citation type="submission" date="2007-05" db="EMBL/GenBank/DDBJ databases">
        <title>Complete sequence of chromosome of Psychrobacter sp. PRwf-1.</title>
        <authorList>
            <consortium name="US DOE Joint Genome Institute"/>
            <person name="Copeland A."/>
            <person name="Lucas S."/>
            <person name="Lapidus A."/>
            <person name="Barry K."/>
            <person name="Detter J.C."/>
            <person name="Glavina del Rio T."/>
            <person name="Hammon N."/>
            <person name="Israni S."/>
            <person name="Dalin E."/>
            <person name="Tice H."/>
            <person name="Pitluck S."/>
            <person name="Chain P."/>
            <person name="Malfatti S."/>
            <person name="Shin M."/>
            <person name="Vergez L."/>
            <person name="Schmutz J."/>
            <person name="Larimer F."/>
            <person name="Land M."/>
            <person name="Hauser L."/>
            <person name="Kyrpides N."/>
            <person name="Kim E."/>
            <person name="Tiedje J."/>
            <person name="Richardson P."/>
        </authorList>
    </citation>
    <scope>NUCLEOTIDE SEQUENCE [LARGE SCALE GENOMIC DNA]</scope>
    <source>
        <strain>PRwf-1</strain>
    </source>
</reference>
<dbReference type="EMBL" id="CP000713">
    <property type="protein sequence ID" value="ABQ94980.1"/>
    <property type="molecule type" value="Genomic_DNA"/>
</dbReference>
<dbReference type="SMR" id="A5WH39"/>
<dbReference type="STRING" id="349106.PsycPRwf_2040"/>
<dbReference type="KEGG" id="prw:PsycPRwf_2040"/>
<dbReference type="eggNOG" id="COG0080">
    <property type="taxonomic scope" value="Bacteria"/>
</dbReference>
<dbReference type="HOGENOM" id="CLU_074237_2_1_6"/>
<dbReference type="GO" id="GO:0022625">
    <property type="term" value="C:cytosolic large ribosomal subunit"/>
    <property type="evidence" value="ECO:0007669"/>
    <property type="project" value="TreeGrafter"/>
</dbReference>
<dbReference type="GO" id="GO:0070180">
    <property type="term" value="F:large ribosomal subunit rRNA binding"/>
    <property type="evidence" value="ECO:0007669"/>
    <property type="project" value="UniProtKB-UniRule"/>
</dbReference>
<dbReference type="GO" id="GO:0003735">
    <property type="term" value="F:structural constituent of ribosome"/>
    <property type="evidence" value="ECO:0007669"/>
    <property type="project" value="InterPro"/>
</dbReference>
<dbReference type="GO" id="GO:0006412">
    <property type="term" value="P:translation"/>
    <property type="evidence" value="ECO:0007669"/>
    <property type="project" value="UniProtKB-UniRule"/>
</dbReference>
<dbReference type="CDD" id="cd00349">
    <property type="entry name" value="Ribosomal_L11"/>
    <property type="match status" value="1"/>
</dbReference>
<dbReference type="FunFam" id="1.10.10.250:FF:000001">
    <property type="entry name" value="50S ribosomal protein L11"/>
    <property type="match status" value="1"/>
</dbReference>
<dbReference type="FunFam" id="3.30.1550.10:FF:000001">
    <property type="entry name" value="50S ribosomal protein L11"/>
    <property type="match status" value="1"/>
</dbReference>
<dbReference type="Gene3D" id="1.10.10.250">
    <property type="entry name" value="Ribosomal protein L11, C-terminal domain"/>
    <property type="match status" value="1"/>
</dbReference>
<dbReference type="Gene3D" id="3.30.1550.10">
    <property type="entry name" value="Ribosomal protein L11/L12, N-terminal domain"/>
    <property type="match status" value="1"/>
</dbReference>
<dbReference type="HAMAP" id="MF_00736">
    <property type="entry name" value="Ribosomal_uL11"/>
    <property type="match status" value="1"/>
</dbReference>
<dbReference type="InterPro" id="IPR000911">
    <property type="entry name" value="Ribosomal_uL11"/>
</dbReference>
<dbReference type="InterPro" id="IPR006519">
    <property type="entry name" value="Ribosomal_uL11_bac-typ"/>
</dbReference>
<dbReference type="InterPro" id="IPR020783">
    <property type="entry name" value="Ribosomal_uL11_C"/>
</dbReference>
<dbReference type="InterPro" id="IPR036769">
    <property type="entry name" value="Ribosomal_uL11_C_sf"/>
</dbReference>
<dbReference type="InterPro" id="IPR020785">
    <property type="entry name" value="Ribosomal_uL11_CS"/>
</dbReference>
<dbReference type="InterPro" id="IPR020784">
    <property type="entry name" value="Ribosomal_uL11_N"/>
</dbReference>
<dbReference type="InterPro" id="IPR036796">
    <property type="entry name" value="Ribosomal_uL11_N_sf"/>
</dbReference>
<dbReference type="NCBIfam" id="TIGR01632">
    <property type="entry name" value="L11_bact"/>
    <property type="match status" value="1"/>
</dbReference>
<dbReference type="PANTHER" id="PTHR11661">
    <property type="entry name" value="60S RIBOSOMAL PROTEIN L12"/>
    <property type="match status" value="1"/>
</dbReference>
<dbReference type="PANTHER" id="PTHR11661:SF1">
    <property type="entry name" value="LARGE RIBOSOMAL SUBUNIT PROTEIN UL11M"/>
    <property type="match status" value="1"/>
</dbReference>
<dbReference type="Pfam" id="PF00298">
    <property type="entry name" value="Ribosomal_L11"/>
    <property type="match status" value="1"/>
</dbReference>
<dbReference type="Pfam" id="PF03946">
    <property type="entry name" value="Ribosomal_L11_N"/>
    <property type="match status" value="1"/>
</dbReference>
<dbReference type="SMART" id="SM00649">
    <property type="entry name" value="RL11"/>
    <property type="match status" value="1"/>
</dbReference>
<dbReference type="SUPFAM" id="SSF54747">
    <property type="entry name" value="Ribosomal L11/L12e N-terminal domain"/>
    <property type="match status" value="1"/>
</dbReference>
<dbReference type="SUPFAM" id="SSF46906">
    <property type="entry name" value="Ribosomal protein L11, C-terminal domain"/>
    <property type="match status" value="1"/>
</dbReference>
<dbReference type="PROSITE" id="PS00359">
    <property type="entry name" value="RIBOSOMAL_L11"/>
    <property type="match status" value="1"/>
</dbReference>
<name>RL11_PSYWF</name>
<sequence>MAKKIDGYIKLQVPAGKANPSPPIGPALGQKGVNIMAFCKEFNAATASMEPGLPIPTEITVYADKSFTFIMKSPPAAFLLRKAAGIAKGSGVPNTTKVGKVTRAQLEEIVQTKNADLTAADLDAAVRTIAGTARSMGIDVEGV</sequence>
<proteinExistence type="inferred from homology"/>
<evidence type="ECO:0000255" key="1">
    <source>
        <dbReference type="HAMAP-Rule" id="MF_00736"/>
    </source>
</evidence>
<evidence type="ECO:0000305" key="2"/>
<organism>
    <name type="scientific">Psychrobacter sp. (strain PRwf-1)</name>
    <dbReference type="NCBI Taxonomy" id="349106"/>
    <lineage>
        <taxon>Bacteria</taxon>
        <taxon>Pseudomonadati</taxon>
        <taxon>Pseudomonadota</taxon>
        <taxon>Gammaproteobacteria</taxon>
        <taxon>Moraxellales</taxon>
        <taxon>Moraxellaceae</taxon>
        <taxon>Psychrobacter</taxon>
    </lineage>
</organism>